<keyword id="KW-0165">Cleavage on pair of basic residues</keyword>
<keyword id="KW-1015">Disulfide bond</keyword>
<keyword id="KW-0325">Glycoprotein</keyword>
<keyword id="KW-0339">Growth factor</keyword>
<keyword id="KW-1185">Reference proteome</keyword>
<keyword id="KW-0964">Secreted</keyword>
<keyword id="KW-0732">Signal</keyword>
<feature type="signal peptide" evidence="2">
    <location>
        <begin position="1"/>
        <end position="18"/>
    </location>
</feature>
<feature type="propeptide" id="PRO_0000019667">
    <location>
        <begin position="19"/>
        <end position="141"/>
    </location>
</feature>
<feature type="chain" id="PRO_0000019668" description="Neurotrophin-3">
    <location>
        <begin position="142"/>
        <end position="260"/>
    </location>
</feature>
<feature type="glycosylation site" description="N-linked (GlcNAc...) asparagine" evidence="2">
    <location>
        <position position="134"/>
    </location>
</feature>
<feature type="disulfide bond" evidence="1">
    <location>
        <begin position="155"/>
        <end position="220"/>
    </location>
</feature>
<feature type="disulfide bond" evidence="1">
    <location>
        <begin position="198"/>
        <end position="249"/>
    </location>
</feature>
<feature type="disulfide bond" evidence="1">
    <location>
        <begin position="208"/>
        <end position="251"/>
    </location>
</feature>
<proteinExistence type="evidence at transcript level"/>
<evidence type="ECO:0000250" key="1"/>
<evidence type="ECO:0000255" key="2"/>
<evidence type="ECO:0000305" key="3"/>
<sequence>MSILFYVMFLPYLCGIHATNMDKRNLPENSMNSLFIKLIQADLLKNKISKQTVDTKENHQSTIPKPQILLDLDGDDNMKQDFQPVISLEAELVKQQKQRRYKSPRVLLSDSLPLEPPPLYLMDDYIGHSTVVNNRTSRRKRFAEHKGHRGEYSVCDSESLWVTDKMNAIDIRGHQVTVLGEIKTGNSPVKQYFYETRCKEARPVKNGCRGIDDKHWNSQCKTSQTYVRALTSENNKMVGWRWIRIDTSCVCALSRKIGRS</sequence>
<comment type="function">
    <text>Seems to promote the survival of visceral and proprioceptive sensory neurons.</text>
</comment>
<comment type="subcellular location">
    <subcellularLocation>
        <location>Secreted</location>
    </subcellularLocation>
</comment>
<comment type="similarity">
    <text evidence="3">Belongs to the NGF-beta family.</text>
</comment>
<protein>
    <recommendedName>
        <fullName>Neurotrophin-3</fullName>
        <shortName>NT-3</shortName>
    </recommendedName>
    <alternativeName>
        <fullName>HDNF</fullName>
    </alternativeName>
    <alternativeName>
        <fullName>Nerve growth factor 2</fullName>
        <shortName>NGF-2</shortName>
    </alternativeName>
    <alternativeName>
        <fullName>Neurotrophic factor</fullName>
    </alternativeName>
</protein>
<reference key="1">
    <citation type="journal article" date="1997" name="J. Neurosci.">
        <title>Activity-dependent expression of NT-3 in muscle cells in culture: implications in the development of neuromuscular junctions.</title>
        <authorList>
            <person name="Xie K."/>
            <person name="Wang T."/>
            <person name="Olafsson P."/>
            <person name="Mizuno K."/>
            <person name="Lu B."/>
        </authorList>
    </citation>
    <scope>NUCLEOTIDE SEQUENCE [MRNA]</scope>
    <source>
        <tissue>Brain</tissue>
    </source>
</reference>
<reference key="2">
    <citation type="journal article" date="1991" name="Neuron">
        <title>Evolutionary studies of the nerve growth factor family reveal a novel member abundantly expressed in Xenopus ovary.</title>
        <authorList>
            <person name="Hallboeoek F."/>
            <person name="Ibanez C.F."/>
            <person name="Persson H."/>
        </authorList>
    </citation>
    <scope>NUCLEOTIDE SEQUENCE [MRNA] OF 197-217</scope>
    <source>
        <tissue>Liver</tissue>
    </source>
</reference>
<gene>
    <name type="primary">ntf3</name>
</gene>
<organism>
    <name type="scientific">Xenopus laevis</name>
    <name type="common">African clawed frog</name>
    <dbReference type="NCBI Taxonomy" id="8355"/>
    <lineage>
        <taxon>Eukaryota</taxon>
        <taxon>Metazoa</taxon>
        <taxon>Chordata</taxon>
        <taxon>Craniata</taxon>
        <taxon>Vertebrata</taxon>
        <taxon>Euteleostomi</taxon>
        <taxon>Amphibia</taxon>
        <taxon>Batrachia</taxon>
        <taxon>Anura</taxon>
        <taxon>Pipoidea</taxon>
        <taxon>Pipidae</taxon>
        <taxon>Xenopodinae</taxon>
        <taxon>Xenopus</taxon>
        <taxon>Xenopus</taxon>
    </lineage>
</organism>
<accession>P25435</accession>
<name>NTF3_XENLA</name>
<dbReference type="EMBL" id="U27576">
    <property type="protein sequence ID" value="AAB17723.1"/>
    <property type="molecule type" value="mRNA"/>
</dbReference>
<dbReference type="RefSeq" id="NP_001084090.1">
    <property type="nucleotide sequence ID" value="NM_001090621.1"/>
</dbReference>
<dbReference type="SMR" id="P25435"/>
<dbReference type="GlyCosmos" id="P25435">
    <property type="glycosylation" value="1 site, No reported glycans"/>
</dbReference>
<dbReference type="GeneID" id="399298"/>
<dbReference type="KEGG" id="xla:399298"/>
<dbReference type="AGR" id="Xenbase:XB-GENE-17331373"/>
<dbReference type="CTD" id="399298"/>
<dbReference type="Xenbase" id="XB-GENE-17331373">
    <property type="gene designation" value="ntf3.L"/>
</dbReference>
<dbReference type="OrthoDB" id="6491780at2759"/>
<dbReference type="Proteomes" id="UP000186698">
    <property type="component" value="Chromosome 3L"/>
</dbReference>
<dbReference type="Bgee" id="399298">
    <property type="expression patterns" value="Expressed in camera-type eye and 14 other cell types or tissues"/>
</dbReference>
<dbReference type="GO" id="GO:0030424">
    <property type="term" value="C:axon"/>
    <property type="evidence" value="ECO:0000318"/>
    <property type="project" value="GO_Central"/>
</dbReference>
<dbReference type="GO" id="GO:0030425">
    <property type="term" value="C:dendrite"/>
    <property type="evidence" value="ECO:0000318"/>
    <property type="project" value="GO_Central"/>
</dbReference>
<dbReference type="GO" id="GO:0005615">
    <property type="term" value="C:extracellular space"/>
    <property type="evidence" value="ECO:0000318"/>
    <property type="project" value="GO_Central"/>
</dbReference>
<dbReference type="GO" id="GO:0008021">
    <property type="term" value="C:synaptic vesicle"/>
    <property type="evidence" value="ECO:0000318"/>
    <property type="project" value="GO_Central"/>
</dbReference>
<dbReference type="GO" id="GO:0008083">
    <property type="term" value="F:growth factor activity"/>
    <property type="evidence" value="ECO:0000318"/>
    <property type="project" value="GO_Central"/>
</dbReference>
<dbReference type="GO" id="GO:0005163">
    <property type="term" value="F:nerve growth factor receptor binding"/>
    <property type="evidence" value="ECO:0000318"/>
    <property type="project" value="GO_Central"/>
</dbReference>
<dbReference type="GO" id="GO:0007169">
    <property type="term" value="P:cell surface receptor protein tyrosine kinase signaling pathway"/>
    <property type="evidence" value="ECO:0000318"/>
    <property type="project" value="GO_Central"/>
</dbReference>
<dbReference type="GO" id="GO:0050804">
    <property type="term" value="P:modulation of chemical synaptic transmission"/>
    <property type="evidence" value="ECO:0000318"/>
    <property type="project" value="GO_Central"/>
</dbReference>
<dbReference type="GO" id="GO:0043524">
    <property type="term" value="P:negative regulation of neuron apoptotic process"/>
    <property type="evidence" value="ECO:0000318"/>
    <property type="project" value="GO_Central"/>
</dbReference>
<dbReference type="GO" id="GO:0021675">
    <property type="term" value="P:nerve development"/>
    <property type="evidence" value="ECO:0000318"/>
    <property type="project" value="GO_Central"/>
</dbReference>
<dbReference type="GO" id="GO:0038180">
    <property type="term" value="P:nerve growth factor signaling pathway"/>
    <property type="evidence" value="ECO:0000318"/>
    <property type="project" value="GO_Central"/>
</dbReference>
<dbReference type="GO" id="GO:0048812">
    <property type="term" value="P:neuron projection morphogenesis"/>
    <property type="evidence" value="ECO:0000318"/>
    <property type="project" value="GO_Central"/>
</dbReference>
<dbReference type="FunFam" id="2.10.90.10:FF:000002">
    <property type="entry name" value="Brain-derived neurotrophic factor"/>
    <property type="match status" value="1"/>
</dbReference>
<dbReference type="Gene3D" id="2.10.90.10">
    <property type="entry name" value="Cystine-knot cytokines"/>
    <property type="match status" value="1"/>
</dbReference>
<dbReference type="InterPro" id="IPR029034">
    <property type="entry name" value="Cystine-knot_cytokine"/>
</dbReference>
<dbReference type="InterPro" id="IPR020408">
    <property type="entry name" value="Nerve_growth_factor-like"/>
</dbReference>
<dbReference type="InterPro" id="IPR002072">
    <property type="entry name" value="Nerve_growth_factor-rel"/>
</dbReference>
<dbReference type="InterPro" id="IPR019846">
    <property type="entry name" value="Nerve_growth_factor_CS"/>
</dbReference>
<dbReference type="InterPro" id="IPR015578">
    <property type="entry name" value="Neurotrophin-3"/>
</dbReference>
<dbReference type="InterPro" id="IPR045815">
    <property type="entry name" value="NTF3_N"/>
</dbReference>
<dbReference type="PANTHER" id="PTHR11589">
    <property type="entry name" value="NERVE GROWTH FACTOR NGF -RELATED"/>
    <property type="match status" value="1"/>
</dbReference>
<dbReference type="PANTHER" id="PTHR11589:SF4">
    <property type="entry name" value="NEUROTROPHIN-3"/>
    <property type="match status" value="1"/>
</dbReference>
<dbReference type="Pfam" id="PF00243">
    <property type="entry name" value="NGF"/>
    <property type="match status" value="1"/>
</dbReference>
<dbReference type="Pfam" id="PF19338">
    <property type="entry name" value="NTF3_N"/>
    <property type="match status" value="1"/>
</dbReference>
<dbReference type="PIRSF" id="PIRSF001789">
    <property type="entry name" value="NGF"/>
    <property type="match status" value="1"/>
</dbReference>
<dbReference type="PRINTS" id="PR01914">
    <property type="entry name" value="NEUROTROPHN3"/>
</dbReference>
<dbReference type="PRINTS" id="PR00268">
    <property type="entry name" value="NGF"/>
</dbReference>
<dbReference type="SMART" id="SM00140">
    <property type="entry name" value="NGF"/>
    <property type="match status" value="1"/>
</dbReference>
<dbReference type="SUPFAM" id="SSF57501">
    <property type="entry name" value="Cystine-knot cytokines"/>
    <property type="match status" value="1"/>
</dbReference>
<dbReference type="PROSITE" id="PS00248">
    <property type="entry name" value="NGF_1"/>
    <property type="match status" value="1"/>
</dbReference>
<dbReference type="PROSITE" id="PS50270">
    <property type="entry name" value="NGF_2"/>
    <property type="match status" value="1"/>
</dbReference>